<accession>Q6UDK3</accession>
<organismHost>
    <name type="scientific">Amazona oratrix</name>
    <name type="common">yellow-headed parrot</name>
    <dbReference type="NCBI Taxonomy" id="152276"/>
</organismHost>
<name>TRM1_PSHV1</name>
<reference key="1">
    <citation type="journal article" date="2006" name="J. Virol.">
        <title>Psittacid herpesvirus 1 and infectious laryngotracheitis virus: Comparative genome sequence analysis of two avian alphaherpesviruses.</title>
        <authorList>
            <person name="Thureen D.R."/>
            <person name="Keeler C.L. Jr."/>
        </authorList>
    </citation>
    <scope>NUCLEOTIDE SEQUENCE [LARGE SCALE GENOMIC DNA]</scope>
</reference>
<proteinExistence type="inferred from homology"/>
<gene>
    <name evidence="1" type="primary">TRM1</name>
    <name type="ordered locus">UL28</name>
</gene>
<comment type="function">
    <text evidence="1">Component of the molecular motor that translocates viral genomic DNA in empty capsid during DNA packaging. Forms a tripartite terminase complex together with TRM2 and TRM3 in the host cytoplasm. Once the complex reaches the host nucleus, it interacts with the capsid portal vertex. This portal forms a ring in which genomic DNA is translocated into the capsid. TRM1 carries an endonuclease activity that plays an important role for the cleavage of concatemeric viral DNA into unit length genomes.</text>
</comment>
<comment type="subunit">
    <text evidence="1">Associates with TRM2 and TRM3 to form the tripartite terminase complex. Interacts with portal protein.</text>
</comment>
<comment type="subcellular location">
    <subcellularLocation>
        <location evidence="1">Host nucleus</location>
    </subcellularLocation>
    <text evidence="1">Found associated with the external surface of the viral capsid during assembly and DNA packaging, but seems absent in extracellular mature virions.</text>
</comment>
<comment type="similarity">
    <text evidence="1">Belongs to the herpesviridae TRM1 protein family.</text>
</comment>
<evidence type="ECO:0000255" key="1">
    <source>
        <dbReference type="HAMAP-Rule" id="MF_04014"/>
    </source>
</evidence>
<evidence type="ECO:0000256" key="2">
    <source>
        <dbReference type="SAM" id="MobiDB-lite"/>
    </source>
</evidence>
<organism>
    <name type="scientific">Psittacid herpesvirus 1 (isolate Amazon parrot/-/97-0001/1997)</name>
    <name type="common">PsHV-1</name>
    <name type="synonym">Pacheco's disease virus</name>
    <dbReference type="NCBI Taxonomy" id="670426"/>
    <lineage>
        <taxon>Viruses</taxon>
        <taxon>Duplodnaviria</taxon>
        <taxon>Heunggongvirae</taxon>
        <taxon>Peploviricota</taxon>
        <taxon>Herviviricetes</taxon>
        <taxon>Herpesvirales</taxon>
        <taxon>Orthoherpesviridae</taxon>
        <taxon>Alphaherpesvirinae</taxon>
        <taxon>Iltovirus</taxon>
        <taxon>Iltovirus psittacidalpha1</taxon>
        <taxon>Psittacid alphaherpesvirus 1</taxon>
    </lineage>
</organism>
<feature type="chain" id="PRO_0000406842" description="Tripartite terminase subunit 1">
    <location>
        <begin position="1"/>
        <end position="859"/>
    </location>
</feature>
<feature type="zinc finger region" description="C3H1-type" evidence="1">
    <location>
        <begin position="231"/>
        <end position="259"/>
    </location>
</feature>
<feature type="region of interest" description="Disordered" evidence="2">
    <location>
        <begin position="512"/>
        <end position="542"/>
    </location>
</feature>
<feature type="compositionally biased region" description="Basic and acidic residues" evidence="2">
    <location>
        <begin position="512"/>
        <end position="525"/>
    </location>
</feature>
<feature type="binding site" evidence="1">
    <location>
        <begin position="782"/>
        <end position="789"/>
    </location>
    <ligand>
        <name>ATP</name>
        <dbReference type="ChEBI" id="CHEBI:30616"/>
    </ligand>
</feature>
<protein>
    <recommendedName>
        <fullName evidence="1">Tripartite terminase subunit 1</fullName>
    </recommendedName>
</protein>
<dbReference type="EMBL" id="AY372243">
    <property type="protein sequence ID" value="AAQ73707.1"/>
    <property type="molecule type" value="Genomic_DNA"/>
</dbReference>
<dbReference type="RefSeq" id="NP_944401.1">
    <property type="nucleotide sequence ID" value="NC_005264.1"/>
</dbReference>
<dbReference type="SMR" id="Q6UDK3"/>
<dbReference type="GeneID" id="2656987"/>
<dbReference type="KEGG" id="vg:2656987"/>
<dbReference type="Proteomes" id="UP000006840">
    <property type="component" value="Segment"/>
</dbReference>
<dbReference type="GO" id="GO:0042025">
    <property type="term" value="C:host cell nucleus"/>
    <property type="evidence" value="ECO:0007669"/>
    <property type="project" value="UniProtKB-SubCell"/>
</dbReference>
<dbReference type="GO" id="GO:0005524">
    <property type="term" value="F:ATP binding"/>
    <property type="evidence" value="ECO:0007669"/>
    <property type="project" value="UniProtKB-KW"/>
</dbReference>
<dbReference type="GO" id="GO:0008270">
    <property type="term" value="F:zinc ion binding"/>
    <property type="evidence" value="ECO:0007669"/>
    <property type="project" value="UniProtKB-KW"/>
</dbReference>
<dbReference type="GO" id="GO:0019073">
    <property type="term" value="P:viral DNA genome packaging"/>
    <property type="evidence" value="ECO:0007669"/>
    <property type="project" value="InterPro"/>
</dbReference>
<dbReference type="HAMAP" id="MF_04014">
    <property type="entry name" value="HSV_TRM1"/>
    <property type="match status" value="1"/>
</dbReference>
<dbReference type="InterPro" id="IPR000501">
    <property type="entry name" value="UL28/UL56"/>
</dbReference>
<dbReference type="Pfam" id="PF01366">
    <property type="entry name" value="PRTP"/>
    <property type="match status" value="1"/>
</dbReference>
<keyword id="KW-0067">ATP-binding</keyword>
<keyword id="KW-1048">Host nucleus</keyword>
<keyword id="KW-0426">Late protein</keyword>
<keyword id="KW-0479">Metal-binding</keyword>
<keyword id="KW-0547">Nucleotide-binding</keyword>
<keyword id="KW-1185">Reference proteome</keyword>
<keyword id="KW-0231">Viral genome packaging</keyword>
<keyword id="KW-1188">Viral release from host cell</keyword>
<keyword id="KW-0862">Zinc</keyword>
<keyword id="KW-0863">Zinc-finger</keyword>
<sequence>MPPAPKNGSAANAWRSERNARPREVWRAIVPKNLMADDTTRRLLAVAGQLQTLLFQIELLKRCDPEVLVKRALRAKIKHNALMVLYLHSRLAGDLAAQAAHRLTVGIYCLWMWLRRACSEAAALANEIDTYATYRDKDRFFSATMNLSPGGTCRLHSLVGLSLYGRTQDVTRELGLINDAENLLKQINYCHLIVSTESAEAALVGVDEFLTATVGGGMVASPETYDHTQPCCICLDELSVTANQGDTIYKRLGYSVCDHLVKQVKVNVTPDDVLRHMPFLNSVDANTLRGAIDKLRGSSGGEVGGGRRLAGVVPTGCRAEVGRSEQEDGAPAGDDRADLEHEARASRILDSYDVFTEAPGPVYRLSELRYWLASGKAAGAKTRGSCAHATHQATVLQKLDTDLSAMFARAETFERECRSAEREIFGTSFAHFHRHVASKIASVRGVGGGGEALIDKLLAGSPATAPEAEIETLISSCYSHHMSLPLFSRLGNPEKADTDALVEILKSYRDQTRPRADKAGGRAEDGAGDCDDEGYPGAADATRRGQRDWIGRVRVDTAAVADEHEDKVKKLLDRAERDLTTRRKNYAERLSARSFSNLDRCVKNQRAELEKLLRVNVYGAALPAMYVELKNGFLARQAFMKAVTSDESQHIRRCRLAREDVEGYEQHQYVRSALMRTSLDPAALPHLASRFYELVSGPMFRRHVERFPQPPNTSLYFTVENVGLLPHLKEELASFTRTYAHAEWMVSEFREFYDFSGISGVSETQRAAYAYIREAVFAAALFESIFQCGRAKLMRADSVEVDAGGPLLTDGIYLTFEERFPLIAIWGVGEDRRLCATSVVVTEKDLYAVLYAVLHKQDK</sequence>